<feature type="chain" id="PRO_0000092434" description="Lipoprotein-releasing system ATP-binding protein LolD">
    <location>
        <begin position="1"/>
        <end position="233"/>
    </location>
</feature>
<feature type="domain" description="ABC transporter" evidence="1">
    <location>
        <begin position="6"/>
        <end position="233"/>
    </location>
</feature>
<feature type="binding site" evidence="1">
    <location>
        <begin position="42"/>
        <end position="49"/>
    </location>
    <ligand>
        <name>ATP</name>
        <dbReference type="ChEBI" id="CHEBI:30616"/>
    </ligand>
</feature>
<feature type="mutagenesis site" description="Loss of lipoprotein release when overexpressed." evidence="2">
    <original>G</original>
    <variation>D</variation>
    <location>
        <position position="42"/>
    </location>
</feature>
<feature type="strand" evidence="4">
    <location>
        <begin position="5"/>
        <end position="9"/>
    </location>
</feature>
<feature type="strand" evidence="6">
    <location>
        <begin position="14"/>
        <end position="17"/>
    </location>
</feature>
<feature type="strand" evidence="6">
    <location>
        <begin position="20"/>
        <end position="23"/>
    </location>
</feature>
<feature type="strand" evidence="4">
    <location>
        <begin position="29"/>
        <end position="32"/>
    </location>
</feature>
<feature type="strand" evidence="4">
    <location>
        <begin position="37"/>
        <end position="41"/>
    </location>
</feature>
<feature type="strand" evidence="5">
    <location>
        <begin position="44"/>
        <end position="47"/>
    </location>
</feature>
<feature type="helix" evidence="5">
    <location>
        <begin position="48"/>
        <end position="54"/>
    </location>
</feature>
<feature type="turn" evidence="5">
    <location>
        <begin position="55"/>
        <end position="57"/>
    </location>
</feature>
<feature type="strand" evidence="5">
    <location>
        <begin position="62"/>
        <end position="65"/>
    </location>
</feature>
<feature type="strand" evidence="7">
    <location>
        <begin position="66"/>
        <end position="72"/>
    </location>
</feature>
<feature type="turn" evidence="5">
    <location>
        <begin position="73"/>
        <end position="75"/>
    </location>
</feature>
<feature type="helix" evidence="5">
    <location>
        <begin position="78"/>
        <end position="87"/>
    </location>
</feature>
<feature type="strand" evidence="5">
    <location>
        <begin position="88"/>
        <end position="92"/>
    </location>
</feature>
<feature type="helix" evidence="5">
    <location>
        <begin position="104"/>
        <end position="108"/>
    </location>
</feature>
<feature type="helix" evidence="5">
    <location>
        <begin position="110"/>
        <end position="114"/>
    </location>
</feature>
<feature type="turn" evidence="5">
    <location>
        <begin position="119"/>
        <end position="121"/>
    </location>
</feature>
<feature type="helix" evidence="5">
    <location>
        <begin position="122"/>
        <end position="133"/>
    </location>
</feature>
<feature type="turn" evidence="5">
    <location>
        <begin position="137"/>
        <end position="140"/>
    </location>
</feature>
<feature type="helix" evidence="4">
    <location>
        <begin position="143"/>
        <end position="145"/>
    </location>
</feature>
<feature type="helix" evidence="5">
    <location>
        <begin position="148"/>
        <end position="159"/>
    </location>
</feature>
<feature type="strand" evidence="5">
    <location>
        <begin position="160"/>
        <end position="162"/>
    </location>
</feature>
<feature type="strand" evidence="5">
    <location>
        <begin position="165"/>
        <end position="170"/>
    </location>
</feature>
<feature type="strand" evidence="5">
    <location>
        <begin position="172"/>
        <end position="176"/>
    </location>
</feature>
<feature type="helix" evidence="5">
    <location>
        <begin position="178"/>
        <end position="183"/>
    </location>
</feature>
<feature type="helix" evidence="5">
    <location>
        <begin position="185"/>
        <end position="190"/>
    </location>
</feature>
<feature type="turn" evidence="5">
    <location>
        <begin position="191"/>
        <end position="194"/>
    </location>
</feature>
<feature type="strand" evidence="5">
    <location>
        <begin position="199"/>
        <end position="202"/>
    </location>
</feature>
<feature type="strand" evidence="5">
    <location>
        <begin position="204"/>
        <end position="208"/>
    </location>
</feature>
<feature type="strand" evidence="5">
    <location>
        <begin position="210"/>
        <end position="214"/>
    </location>
</feature>
<feature type="strand" evidence="6">
    <location>
        <begin position="217"/>
        <end position="219"/>
    </location>
</feature>
<feature type="strand" evidence="7">
    <location>
        <begin position="220"/>
        <end position="226"/>
    </location>
</feature>
<proteinExistence type="evidence at protein level"/>
<keyword id="KW-0002">3D-structure</keyword>
<keyword id="KW-0067">ATP-binding</keyword>
<keyword id="KW-0997">Cell inner membrane</keyword>
<keyword id="KW-1003">Cell membrane</keyword>
<keyword id="KW-0903">Direct protein sequencing</keyword>
<keyword id="KW-0472">Membrane</keyword>
<keyword id="KW-0547">Nucleotide-binding</keyword>
<keyword id="KW-1185">Reference proteome</keyword>
<keyword id="KW-1278">Translocase</keyword>
<keyword id="KW-0813">Transport</keyword>
<accession>P75957</accession>
<accession>Q9R7N6</accession>
<gene>
    <name evidence="1" type="primary">lolD</name>
    <name type="synonym">ycfV</name>
    <name type="ordered locus">b1117</name>
    <name type="ordered locus">JW5162</name>
</gene>
<organism>
    <name type="scientific">Escherichia coli (strain K12)</name>
    <dbReference type="NCBI Taxonomy" id="83333"/>
    <lineage>
        <taxon>Bacteria</taxon>
        <taxon>Pseudomonadati</taxon>
        <taxon>Pseudomonadota</taxon>
        <taxon>Gammaproteobacteria</taxon>
        <taxon>Enterobacterales</taxon>
        <taxon>Enterobacteriaceae</taxon>
        <taxon>Escherichia</taxon>
    </lineage>
</organism>
<dbReference type="EC" id="7.6.2.-" evidence="1"/>
<dbReference type="EMBL" id="U00096">
    <property type="protein sequence ID" value="AAC74201.2"/>
    <property type="molecule type" value="Genomic_DNA"/>
</dbReference>
<dbReference type="EMBL" id="AP009048">
    <property type="protein sequence ID" value="BAA35937.2"/>
    <property type="molecule type" value="Genomic_DNA"/>
</dbReference>
<dbReference type="PIR" id="B64856">
    <property type="entry name" value="B64856"/>
</dbReference>
<dbReference type="RefSeq" id="NP_415635.4">
    <property type="nucleotide sequence ID" value="NC_000913.3"/>
</dbReference>
<dbReference type="RefSeq" id="WP_001033694.1">
    <property type="nucleotide sequence ID" value="NZ_SSZK01000019.1"/>
</dbReference>
<dbReference type="PDB" id="7ARH">
    <property type="method" value="EM"/>
    <property type="resolution" value="3.30 A"/>
    <property type="chains" value="D/F=1-233"/>
</dbReference>
<dbReference type="PDB" id="7ARI">
    <property type="method" value="EM"/>
    <property type="resolution" value="3.40 A"/>
    <property type="chains" value="D/F=1-233"/>
</dbReference>
<dbReference type="PDB" id="7ARJ">
    <property type="method" value="EM"/>
    <property type="resolution" value="3.20 A"/>
    <property type="chains" value="D/F=1-233"/>
</dbReference>
<dbReference type="PDB" id="7ARK">
    <property type="method" value="EM"/>
    <property type="resolution" value="4.10 A"/>
    <property type="chains" value="D/F=1-233"/>
</dbReference>
<dbReference type="PDB" id="7ARL">
    <property type="method" value="EM"/>
    <property type="resolution" value="3.20 A"/>
    <property type="chains" value="D/F=1-233"/>
</dbReference>
<dbReference type="PDB" id="7ARM">
    <property type="method" value="EM"/>
    <property type="resolution" value="3.60 A"/>
    <property type="chains" value="D/F=1-233"/>
</dbReference>
<dbReference type="PDB" id="7MDX">
    <property type="method" value="EM"/>
    <property type="resolution" value="3.80 A"/>
    <property type="chains" value="C/D=4-221"/>
</dbReference>
<dbReference type="PDB" id="7MDY">
    <property type="method" value="EM"/>
    <property type="resolution" value="3.50 A"/>
    <property type="chains" value="C/D=3-228"/>
</dbReference>
<dbReference type="PDB" id="7V8I">
    <property type="method" value="EM"/>
    <property type="resolution" value="3.60 A"/>
    <property type="chains" value="D/F=1-233"/>
</dbReference>
<dbReference type="PDB" id="7V8L">
    <property type="method" value="EM"/>
    <property type="resolution" value="3.50 A"/>
    <property type="chains" value="D/F=1-233"/>
</dbReference>
<dbReference type="PDB" id="7V8M">
    <property type="method" value="EM"/>
    <property type="resolution" value="4.20 A"/>
    <property type="chains" value="D/F=1-233"/>
</dbReference>
<dbReference type="PDB" id="9GRC">
    <property type="method" value="EM"/>
    <property type="resolution" value="3.50 A"/>
    <property type="chains" value="D/F=1-233"/>
</dbReference>
<dbReference type="PDB" id="9GVK">
    <property type="method" value="EM"/>
    <property type="resolution" value="3.50 A"/>
    <property type="chains" value="D/F=1-233"/>
</dbReference>
<dbReference type="PDBsum" id="7ARH"/>
<dbReference type="PDBsum" id="7ARI"/>
<dbReference type="PDBsum" id="7ARJ"/>
<dbReference type="PDBsum" id="7ARK"/>
<dbReference type="PDBsum" id="7ARL"/>
<dbReference type="PDBsum" id="7ARM"/>
<dbReference type="PDBsum" id="7MDX"/>
<dbReference type="PDBsum" id="7MDY"/>
<dbReference type="PDBsum" id="7V8I"/>
<dbReference type="PDBsum" id="7V8L"/>
<dbReference type="PDBsum" id="7V8M"/>
<dbReference type="PDBsum" id="9GRC"/>
<dbReference type="PDBsum" id="9GVK"/>
<dbReference type="EMDB" id="EMD-11882"/>
<dbReference type="EMDB" id="EMD-11883"/>
<dbReference type="EMDB" id="EMD-11884"/>
<dbReference type="EMDB" id="EMD-11885"/>
<dbReference type="EMDB" id="EMD-11886"/>
<dbReference type="EMDB" id="EMD-11887"/>
<dbReference type="EMDB" id="EMD-23783"/>
<dbReference type="EMDB" id="EMD-31802"/>
<dbReference type="EMDB" id="EMD-31803"/>
<dbReference type="EMDB" id="EMD-31804"/>
<dbReference type="EMDB" id="EMD-51520"/>
<dbReference type="EMDB" id="EMD-51637"/>
<dbReference type="SMR" id="P75957"/>
<dbReference type="BioGRID" id="4260088">
    <property type="interactions" value="234"/>
</dbReference>
<dbReference type="BioGRID" id="850042">
    <property type="interactions" value="7"/>
</dbReference>
<dbReference type="ComplexPortal" id="CPX-4262">
    <property type="entry name" value="LolCDE lipoprotein ABC transporter complex"/>
</dbReference>
<dbReference type="DIP" id="DIP-10115N"/>
<dbReference type="FunCoup" id="P75957">
    <property type="interactions" value="614"/>
</dbReference>
<dbReference type="IntAct" id="P75957">
    <property type="interactions" value="15"/>
</dbReference>
<dbReference type="STRING" id="511145.b1117"/>
<dbReference type="TCDB" id="3.A.1.125.1">
    <property type="family name" value="the atp-binding cassette (abc) superfamily"/>
</dbReference>
<dbReference type="jPOST" id="P75957"/>
<dbReference type="PaxDb" id="511145-b1117"/>
<dbReference type="EnsemblBacteria" id="AAC74201">
    <property type="protein sequence ID" value="AAC74201"/>
    <property type="gene ID" value="b1117"/>
</dbReference>
<dbReference type="GeneID" id="75203703"/>
<dbReference type="GeneID" id="945670"/>
<dbReference type="KEGG" id="ecj:JW5162"/>
<dbReference type="KEGG" id="eco:b1117"/>
<dbReference type="KEGG" id="ecoc:C3026_06730"/>
<dbReference type="PATRIC" id="fig|1411691.4.peg.1150"/>
<dbReference type="EchoBASE" id="EB3214"/>
<dbReference type="eggNOG" id="COG1136">
    <property type="taxonomic scope" value="Bacteria"/>
</dbReference>
<dbReference type="HOGENOM" id="CLU_000604_1_22_6"/>
<dbReference type="InParanoid" id="P75957"/>
<dbReference type="OMA" id="DHHTAQG"/>
<dbReference type="OrthoDB" id="9801477at2"/>
<dbReference type="PhylomeDB" id="P75957"/>
<dbReference type="BioCyc" id="EcoCyc:YCFV-MONOMER"/>
<dbReference type="BioCyc" id="MetaCyc:YCFV-MONOMER"/>
<dbReference type="PRO" id="PR:P75957"/>
<dbReference type="Proteomes" id="UP000000625">
    <property type="component" value="Chromosome"/>
</dbReference>
<dbReference type="GO" id="GO:0043190">
    <property type="term" value="C:ATP-binding cassette (ABC) transporter complex"/>
    <property type="evidence" value="ECO:0000353"/>
    <property type="project" value="ComplexPortal"/>
</dbReference>
<dbReference type="GO" id="GO:0005886">
    <property type="term" value="C:plasma membrane"/>
    <property type="evidence" value="ECO:0000314"/>
    <property type="project" value="CACAO"/>
</dbReference>
<dbReference type="GO" id="GO:0098797">
    <property type="term" value="C:plasma membrane protein complex"/>
    <property type="evidence" value="ECO:0000314"/>
    <property type="project" value="EcoCyc"/>
</dbReference>
<dbReference type="GO" id="GO:0005524">
    <property type="term" value="F:ATP binding"/>
    <property type="evidence" value="ECO:0000255"/>
    <property type="project" value="EcoCyc"/>
</dbReference>
<dbReference type="GO" id="GO:0016887">
    <property type="term" value="F:ATP hydrolysis activity"/>
    <property type="evidence" value="ECO:0007669"/>
    <property type="project" value="InterPro"/>
</dbReference>
<dbReference type="GO" id="GO:0140306">
    <property type="term" value="F:lipoprotein releasing activity"/>
    <property type="evidence" value="ECO:0000314"/>
    <property type="project" value="EcoCyc"/>
</dbReference>
<dbReference type="GO" id="GO:0022857">
    <property type="term" value="F:transmembrane transporter activity"/>
    <property type="evidence" value="ECO:0000318"/>
    <property type="project" value="GO_Central"/>
</dbReference>
<dbReference type="GO" id="GO:0044874">
    <property type="term" value="P:lipoprotein localization to outer membrane"/>
    <property type="evidence" value="ECO:0000314"/>
    <property type="project" value="EcoCyc"/>
</dbReference>
<dbReference type="GO" id="GO:0089705">
    <property type="term" value="P:protein localization to outer membrane"/>
    <property type="evidence" value="ECO:0000314"/>
    <property type="project" value="CACAO"/>
</dbReference>
<dbReference type="GO" id="GO:0055085">
    <property type="term" value="P:transmembrane transport"/>
    <property type="evidence" value="ECO:0000318"/>
    <property type="project" value="GO_Central"/>
</dbReference>
<dbReference type="CDD" id="cd03255">
    <property type="entry name" value="ABC_MJ0796_LolCDE_FtsE"/>
    <property type="match status" value="1"/>
</dbReference>
<dbReference type="FunFam" id="3.40.50.300:FF:000230">
    <property type="entry name" value="Lipoprotein-releasing system ATP-binding protein LolD"/>
    <property type="match status" value="1"/>
</dbReference>
<dbReference type="Gene3D" id="3.40.50.300">
    <property type="entry name" value="P-loop containing nucleotide triphosphate hydrolases"/>
    <property type="match status" value="1"/>
</dbReference>
<dbReference type="InterPro" id="IPR003593">
    <property type="entry name" value="AAA+_ATPase"/>
</dbReference>
<dbReference type="InterPro" id="IPR003439">
    <property type="entry name" value="ABC_transporter-like_ATP-bd"/>
</dbReference>
<dbReference type="InterPro" id="IPR017871">
    <property type="entry name" value="ABC_transporter-like_CS"/>
</dbReference>
<dbReference type="InterPro" id="IPR015854">
    <property type="entry name" value="ABC_transpr_LolD-like"/>
</dbReference>
<dbReference type="InterPro" id="IPR011924">
    <property type="entry name" value="LolD_lipo_ATP-bd"/>
</dbReference>
<dbReference type="InterPro" id="IPR017911">
    <property type="entry name" value="MacB-like_ATP-bd"/>
</dbReference>
<dbReference type="InterPro" id="IPR027417">
    <property type="entry name" value="P-loop_NTPase"/>
</dbReference>
<dbReference type="NCBIfam" id="TIGR02211">
    <property type="entry name" value="LolD_lipo_ex"/>
    <property type="match status" value="1"/>
</dbReference>
<dbReference type="NCBIfam" id="NF008639">
    <property type="entry name" value="PRK11629.1"/>
    <property type="match status" value="1"/>
</dbReference>
<dbReference type="PANTHER" id="PTHR24220">
    <property type="entry name" value="IMPORT ATP-BINDING PROTEIN"/>
    <property type="match status" value="1"/>
</dbReference>
<dbReference type="PANTHER" id="PTHR24220:SF689">
    <property type="entry name" value="LIPOPROTEIN-RELEASING SYSTEM ATP-BINDING PROTEIN LOLD"/>
    <property type="match status" value="1"/>
</dbReference>
<dbReference type="Pfam" id="PF00005">
    <property type="entry name" value="ABC_tran"/>
    <property type="match status" value="1"/>
</dbReference>
<dbReference type="SMART" id="SM00382">
    <property type="entry name" value="AAA"/>
    <property type="match status" value="1"/>
</dbReference>
<dbReference type="SUPFAM" id="SSF52540">
    <property type="entry name" value="P-loop containing nucleoside triphosphate hydrolases"/>
    <property type="match status" value="1"/>
</dbReference>
<dbReference type="PROSITE" id="PS00211">
    <property type="entry name" value="ABC_TRANSPORTER_1"/>
    <property type="match status" value="1"/>
</dbReference>
<dbReference type="PROSITE" id="PS50893">
    <property type="entry name" value="ABC_TRANSPORTER_2"/>
    <property type="match status" value="1"/>
</dbReference>
<dbReference type="PROSITE" id="PS51244">
    <property type="entry name" value="LOLD"/>
    <property type="match status" value="1"/>
</dbReference>
<protein>
    <recommendedName>
        <fullName evidence="1">Lipoprotein-releasing system ATP-binding protein LolD</fullName>
        <ecNumber evidence="1">7.6.2.-</ecNumber>
    </recommendedName>
</protein>
<sequence>MNKILLQCDNLCKRYQEGSVQTDVLHNVSFSVGEGEMMAIVGSSGSGKSTLLHLLGGLDTPTSGDVIFNGQPMSKLSSAAKAELRNQKLGFIYQFHHLLPDFTALENVAMPLLIGKKKPAEINSRALEMLKAVGLDHRANHRPSELSGGERQRVAIARALVNNPRLVLADEPTGNLDARNADSIFQLLGELNRLQGTAFLVVTHDLQLAKRMSRQLEMRDGRLTAELSLMGAE</sequence>
<reference key="1">
    <citation type="journal article" date="1996" name="DNA Res.">
        <title>A 718-kb DNA sequence of the Escherichia coli K-12 genome corresponding to the 12.7-28.0 min region on the linkage map.</title>
        <authorList>
            <person name="Oshima T."/>
            <person name="Aiba H."/>
            <person name="Baba T."/>
            <person name="Fujita K."/>
            <person name="Hayashi K."/>
            <person name="Honjo A."/>
            <person name="Ikemoto K."/>
            <person name="Inada T."/>
            <person name="Itoh T."/>
            <person name="Kajihara M."/>
            <person name="Kanai K."/>
            <person name="Kashimoto K."/>
            <person name="Kimura S."/>
            <person name="Kitagawa M."/>
            <person name="Makino K."/>
            <person name="Masuda S."/>
            <person name="Miki T."/>
            <person name="Mizobuchi K."/>
            <person name="Mori H."/>
            <person name="Motomura K."/>
            <person name="Nakamura Y."/>
            <person name="Nashimoto H."/>
            <person name="Nishio Y."/>
            <person name="Saito N."/>
            <person name="Sampei G."/>
            <person name="Seki Y."/>
            <person name="Tagami H."/>
            <person name="Takemoto K."/>
            <person name="Wada C."/>
            <person name="Yamamoto Y."/>
            <person name="Yano M."/>
            <person name="Horiuchi T."/>
        </authorList>
    </citation>
    <scope>NUCLEOTIDE SEQUENCE [LARGE SCALE GENOMIC DNA]</scope>
    <source>
        <strain>K12 / W3110 / ATCC 27325 / DSM 5911</strain>
    </source>
</reference>
<reference key="2">
    <citation type="journal article" date="1997" name="Science">
        <title>The complete genome sequence of Escherichia coli K-12.</title>
        <authorList>
            <person name="Blattner F.R."/>
            <person name="Plunkett G. III"/>
            <person name="Bloch C.A."/>
            <person name="Perna N.T."/>
            <person name="Burland V."/>
            <person name="Riley M."/>
            <person name="Collado-Vides J."/>
            <person name="Glasner J.D."/>
            <person name="Rode C.K."/>
            <person name="Mayhew G.F."/>
            <person name="Gregor J."/>
            <person name="Davis N.W."/>
            <person name="Kirkpatrick H.A."/>
            <person name="Goeden M.A."/>
            <person name="Rose D.J."/>
            <person name="Mau B."/>
            <person name="Shao Y."/>
        </authorList>
    </citation>
    <scope>NUCLEOTIDE SEQUENCE [LARGE SCALE GENOMIC DNA]</scope>
    <source>
        <strain>K12 / MG1655 / ATCC 47076</strain>
    </source>
</reference>
<reference key="3">
    <citation type="journal article" date="2006" name="Mol. Syst. Biol.">
        <title>Highly accurate genome sequences of Escherichia coli K-12 strains MG1655 and W3110.</title>
        <authorList>
            <person name="Hayashi K."/>
            <person name="Morooka N."/>
            <person name="Yamamoto Y."/>
            <person name="Fujita K."/>
            <person name="Isono K."/>
            <person name="Choi S."/>
            <person name="Ohtsubo E."/>
            <person name="Baba T."/>
            <person name="Wanner B.L."/>
            <person name="Mori H."/>
            <person name="Horiuchi T."/>
        </authorList>
    </citation>
    <scope>NUCLEOTIDE SEQUENCE [LARGE SCALE GENOMIC DNA]</scope>
    <source>
        <strain>K12 / W3110 / ATCC 27325 / DSM 5911</strain>
    </source>
</reference>
<reference key="4">
    <citation type="journal article" date="2000" name="Nat. Cell Biol.">
        <title>A new ABC transporter mediating the detachment of lipid-modified proteins from membranes.</title>
        <authorList>
            <person name="Yakushi T."/>
            <person name="Masuda K."/>
            <person name="Narita S."/>
            <person name="Matsuyama S."/>
            <person name="Tokuda H."/>
        </authorList>
    </citation>
    <scope>PROTEIN SEQUENCE OF 1-11</scope>
    <scope>MUTAGENESIS OF GLY-42</scope>
    <scope>CHARACTERIZATION</scope>
</reference>
<reference key="5">
    <citation type="journal article" date="2002" name="J. Bacteriol.">
        <title>Disruption of lolCDE, encoding an ATP-binding cassette transporter, is lethal for Escherichia coli and prevents release of lipoproteins from the inner membrane.</title>
        <authorList>
            <person name="Narita S."/>
            <person name="Tanaka K."/>
            <person name="Matsuyama S."/>
            <person name="Tokuda H."/>
        </authorList>
    </citation>
    <scope>CHARACTERIZATION</scope>
    <scope>SUBUNIT</scope>
</reference>
<comment type="function">
    <text>Part of the ABC transporter complex LolCDE involved in the translocation of mature outer membrane-directed lipoproteins, from the inner membrane to the periplasmic chaperone, LolA. Responsible for the formation of the LolA-lipoprotein complex in an ATP-dependent manner. Such a release is dependent of the sorting-signal (absence of an Asp at position 2 of the mature lipoprotein) and of LolA.</text>
</comment>
<comment type="subunit">
    <text evidence="1 3">The complex is composed of two ATP-binding proteins (LolD) and two transmembrane proteins (LolC and LolE).</text>
</comment>
<comment type="subcellular location">
    <subcellularLocation>
        <location>Cell inner membrane</location>
        <topology>Peripheral membrane protein</topology>
    </subcellularLocation>
</comment>
<comment type="similarity">
    <text evidence="1">Belongs to the ABC transporter superfamily. Lipoprotein translocase (TC 3.A.1.125) family.</text>
</comment>
<name>LOLD_ECOLI</name>
<evidence type="ECO:0000255" key="1">
    <source>
        <dbReference type="HAMAP-Rule" id="MF_01708"/>
    </source>
</evidence>
<evidence type="ECO:0000269" key="2">
    <source>
    </source>
</evidence>
<evidence type="ECO:0000269" key="3">
    <source>
    </source>
</evidence>
<evidence type="ECO:0007829" key="4">
    <source>
        <dbReference type="PDB" id="7ARH"/>
    </source>
</evidence>
<evidence type="ECO:0007829" key="5">
    <source>
        <dbReference type="PDB" id="7ARJ"/>
    </source>
</evidence>
<evidence type="ECO:0007829" key="6">
    <source>
        <dbReference type="PDB" id="7ARL"/>
    </source>
</evidence>
<evidence type="ECO:0007829" key="7">
    <source>
        <dbReference type="PDB" id="7MDY"/>
    </source>
</evidence>